<gene>
    <name evidence="1" type="primary">aspS</name>
    <name type="ordered locus">AZOSEA24590</name>
    <name type="ORF">ebA4339</name>
</gene>
<feature type="chain" id="PRO_0000110819" description="Aspartate--tRNA(Asp/Asn) ligase">
    <location>
        <begin position="1"/>
        <end position="599"/>
    </location>
</feature>
<feature type="region of interest" description="Aspartate" evidence="1">
    <location>
        <begin position="196"/>
        <end position="199"/>
    </location>
</feature>
<feature type="binding site" evidence="1">
    <location>
        <position position="172"/>
    </location>
    <ligand>
        <name>L-aspartate</name>
        <dbReference type="ChEBI" id="CHEBI:29991"/>
    </ligand>
</feature>
<feature type="binding site" evidence="1">
    <location>
        <begin position="218"/>
        <end position="220"/>
    </location>
    <ligand>
        <name>ATP</name>
        <dbReference type="ChEBI" id="CHEBI:30616"/>
    </ligand>
</feature>
<feature type="binding site" evidence="1">
    <location>
        <position position="218"/>
    </location>
    <ligand>
        <name>L-aspartate</name>
        <dbReference type="ChEBI" id="CHEBI:29991"/>
    </ligand>
</feature>
<feature type="binding site" evidence="1">
    <location>
        <position position="227"/>
    </location>
    <ligand>
        <name>ATP</name>
        <dbReference type="ChEBI" id="CHEBI:30616"/>
    </ligand>
</feature>
<feature type="binding site" evidence="1">
    <location>
        <position position="451"/>
    </location>
    <ligand>
        <name>L-aspartate</name>
        <dbReference type="ChEBI" id="CHEBI:29991"/>
    </ligand>
</feature>
<feature type="binding site" evidence="1">
    <location>
        <position position="485"/>
    </location>
    <ligand>
        <name>ATP</name>
        <dbReference type="ChEBI" id="CHEBI:30616"/>
    </ligand>
</feature>
<feature type="binding site" evidence="1">
    <location>
        <position position="492"/>
    </location>
    <ligand>
        <name>L-aspartate</name>
        <dbReference type="ChEBI" id="CHEBI:29991"/>
    </ligand>
</feature>
<feature type="binding site" evidence="1">
    <location>
        <begin position="537"/>
        <end position="540"/>
    </location>
    <ligand>
        <name>ATP</name>
        <dbReference type="ChEBI" id="CHEBI:30616"/>
    </ligand>
</feature>
<feature type="site" description="Important for tRNA non-discrimination" evidence="1">
    <location>
        <position position="30"/>
    </location>
</feature>
<feature type="site" description="Important for tRNA non-discrimination" evidence="1">
    <location>
        <position position="81"/>
    </location>
</feature>
<evidence type="ECO:0000255" key="1">
    <source>
        <dbReference type="HAMAP-Rule" id="MF_00044"/>
    </source>
</evidence>
<dbReference type="EC" id="6.1.1.23" evidence="1"/>
<dbReference type="EMBL" id="CR555306">
    <property type="protein sequence ID" value="CAI08584.1"/>
    <property type="molecule type" value="Genomic_DNA"/>
</dbReference>
<dbReference type="RefSeq" id="WP_011238270.1">
    <property type="nucleotide sequence ID" value="NC_006513.1"/>
</dbReference>
<dbReference type="SMR" id="Q5P280"/>
<dbReference type="STRING" id="76114.ebA4339"/>
<dbReference type="KEGG" id="eba:ebA4339"/>
<dbReference type="eggNOG" id="COG0173">
    <property type="taxonomic scope" value="Bacteria"/>
</dbReference>
<dbReference type="HOGENOM" id="CLU_014330_3_2_4"/>
<dbReference type="OrthoDB" id="9802326at2"/>
<dbReference type="Proteomes" id="UP000006552">
    <property type="component" value="Chromosome"/>
</dbReference>
<dbReference type="GO" id="GO:0005737">
    <property type="term" value="C:cytoplasm"/>
    <property type="evidence" value="ECO:0007669"/>
    <property type="project" value="UniProtKB-SubCell"/>
</dbReference>
<dbReference type="GO" id="GO:0004815">
    <property type="term" value="F:aspartate-tRNA ligase activity"/>
    <property type="evidence" value="ECO:0007669"/>
    <property type="project" value="UniProtKB-UniRule"/>
</dbReference>
<dbReference type="GO" id="GO:0050560">
    <property type="term" value="F:aspartate-tRNA(Asn) ligase activity"/>
    <property type="evidence" value="ECO:0007669"/>
    <property type="project" value="UniProtKB-EC"/>
</dbReference>
<dbReference type="GO" id="GO:0005524">
    <property type="term" value="F:ATP binding"/>
    <property type="evidence" value="ECO:0007669"/>
    <property type="project" value="UniProtKB-UniRule"/>
</dbReference>
<dbReference type="GO" id="GO:0003676">
    <property type="term" value="F:nucleic acid binding"/>
    <property type="evidence" value="ECO:0007669"/>
    <property type="project" value="InterPro"/>
</dbReference>
<dbReference type="GO" id="GO:0006422">
    <property type="term" value="P:aspartyl-tRNA aminoacylation"/>
    <property type="evidence" value="ECO:0007669"/>
    <property type="project" value="UniProtKB-UniRule"/>
</dbReference>
<dbReference type="CDD" id="cd00777">
    <property type="entry name" value="AspRS_core"/>
    <property type="match status" value="1"/>
</dbReference>
<dbReference type="CDD" id="cd04317">
    <property type="entry name" value="EcAspRS_like_N"/>
    <property type="match status" value="1"/>
</dbReference>
<dbReference type="Gene3D" id="3.30.930.10">
    <property type="entry name" value="Bira Bifunctional Protein, Domain 2"/>
    <property type="match status" value="1"/>
</dbReference>
<dbReference type="Gene3D" id="3.30.1360.30">
    <property type="entry name" value="GAD-like domain"/>
    <property type="match status" value="1"/>
</dbReference>
<dbReference type="Gene3D" id="2.40.50.140">
    <property type="entry name" value="Nucleic acid-binding proteins"/>
    <property type="match status" value="1"/>
</dbReference>
<dbReference type="HAMAP" id="MF_00044">
    <property type="entry name" value="Asp_tRNA_synth_type1"/>
    <property type="match status" value="1"/>
</dbReference>
<dbReference type="InterPro" id="IPR004364">
    <property type="entry name" value="Aa-tRNA-synt_II"/>
</dbReference>
<dbReference type="InterPro" id="IPR006195">
    <property type="entry name" value="aa-tRNA-synth_II"/>
</dbReference>
<dbReference type="InterPro" id="IPR045864">
    <property type="entry name" value="aa-tRNA-synth_II/BPL/LPL"/>
</dbReference>
<dbReference type="InterPro" id="IPR004524">
    <property type="entry name" value="Asp-tRNA-ligase_1"/>
</dbReference>
<dbReference type="InterPro" id="IPR047089">
    <property type="entry name" value="Asp-tRNA-ligase_1_N"/>
</dbReference>
<dbReference type="InterPro" id="IPR002312">
    <property type="entry name" value="Asp/Asn-tRNA-synth_IIb"/>
</dbReference>
<dbReference type="InterPro" id="IPR047090">
    <property type="entry name" value="AspRS_core"/>
</dbReference>
<dbReference type="InterPro" id="IPR004115">
    <property type="entry name" value="GAD-like_sf"/>
</dbReference>
<dbReference type="InterPro" id="IPR029351">
    <property type="entry name" value="GAD_dom"/>
</dbReference>
<dbReference type="InterPro" id="IPR012340">
    <property type="entry name" value="NA-bd_OB-fold"/>
</dbReference>
<dbReference type="InterPro" id="IPR004365">
    <property type="entry name" value="NA-bd_OB_tRNA"/>
</dbReference>
<dbReference type="NCBIfam" id="TIGR00459">
    <property type="entry name" value="aspS_bact"/>
    <property type="match status" value="1"/>
</dbReference>
<dbReference type="NCBIfam" id="NF001750">
    <property type="entry name" value="PRK00476.1"/>
    <property type="match status" value="1"/>
</dbReference>
<dbReference type="PANTHER" id="PTHR22594:SF5">
    <property type="entry name" value="ASPARTATE--TRNA LIGASE, MITOCHONDRIAL"/>
    <property type="match status" value="1"/>
</dbReference>
<dbReference type="PANTHER" id="PTHR22594">
    <property type="entry name" value="ASPARTYL/LYSYL-TRNA SYNTHETASE"/>
    <property type="match status" value="1"/>
</dbReference>
<dbReference type="Pfam" id="PF02938">
    <property type="entry name" value="GAD"/>
    <property type="match status" value="1"/>
</dbReference>
<dbReference type="Pfam" id="PF00152">
    <property type="entry name" value="tRNA-synt_2"/>
    <property type="match status" value="1"/>
</dbReference>
<dbReference type="Pfam" id="PF01336">
    <property type="entry name" value="tRNA_anti-codon"/>
    <property type="match status" value="1"/>
</dbReference>
<dbReference type="PRINTS" id="PR01042">
    <property type="entry name" value="TRNASYNTHASP"/>
</dbReference>
<dbReference type="SUPFAM" id="SSF55681">
    <property type="entry name" value="Class II aaRS and biotin synthetases"/>
    <property type="match status" value="1"/>
</dbReference>
<dbReference type="SUPFAM" id="SSF55261">
    <property type="entry name" value="GAD domain-like"/>
    <property type="match status" value="1"/>
</dbReference>
<dbReference type="SUPFAM" id="SSF50249">
    <property type="entry name" value="Nucleic acid-binding proteins"/>
    <property type="match status" value="1"/>
</dbReference>
<dbReference type="PROSITE" id="PS50862">
    <property type="entry name" value="AA_TRNA_LIGASE_II"/>
    <property type="match status" value="1"/>
</dbReference>
<accession>Q5P280</accession>
<protein>
    <recommendedName>
        <fullName evidence="1">Aspartate--tRNA(Asp/Asn) ligase</fullName>
        <ecNumber evidence="1">6.1.1.23</ecNumber>
    </recommendedName>
    <alternativeName>
        <fullName evidence="1">Aspartyl-tRNA synthetase</fullName>
        <shortName evidence="1">AspRS</shortName>
    </alternativeName>
    <alternativeName>
        <fullName evidence="1">Non-discriminating aspartyl-tRNA synthetase</fullName>
        <shortName evidence="1">ND-AspRS</shortName>
    </alternativeName>
</protein>
<organism>
    <name type="scientific">Aromatoleum aromaticum (strain DSM 19018 / LMG 30748 / EbN1)</name>
    <name type="common">Azoarcus sp. (strain EbN1)</name>
    <dbReference type="NCBI Taxonomy" id="76114"/>
    <lineage>
        <taxon>Bacteria</taxon>
        <taxon>Pseudomonadati</taxon>
        <taxon>Pseudomonadota</taxon>
        <taxon>Betaproteobacteria</taxon>
        <taxon>Rhodocyclales</taxon>
        <taxon>Rhodocyclaceae</taxon>
        <taxon>Aromatoleum</taxon>
    </lineage>
</organism>
<sequence>MRTHYCGQVTAADLDQTVTLCGWVHRRRDHGGVIFIDLRDREGLVQVVCDPDRAETFHTAESIRNEFVIELTGKVRRRPAGTENPNLVSGEIEVLCHTLEVLNASATPPFQLDDDNLSENVRLTHRVIDLRRPQMQKNLMLRYKVAMAFRRFLDAQGFIDVETPMLTKSTPEGARDYLVPSRVHPGQFFALPQSPQLFKQLLMVAGFDRYYQITKCFRDEDLRADRQPEFTQVDIETSFLDEAEITAIMEDMIRYVFREALAVELPNPFPRMTHAEAMRRYGSDKPDLRVTLELTDVTDAVQDVAFKVFSGPATSGGRVAALRVPGGASLTRGEIDEYTKFVGIYGARGLAYIKVNDVTKPNDEGLQSPIVKNLHEEALRTILERTGAESGDLIFFGADKTKVVNDALGALRTKLGHEKGYVSGAAWTPVWVVDFPMFEYDDESKRWVACHHPFTAPKDEHVELLESAPGECLAKAYDLALNGWEIGGGSVRIHRADMQSKVFRALNIGDEEAQLKFGFLLDALKYGAPPHGGLAFGLDRVVTLMTGAESIRDVIAFPKTQRAQCLLTDAPGEVDDKQLRELHIRLRQKIETQVEVAKA</sequence>
<keyword id="KW-0030">Aminoacyl-tRNA synthetase</keyword>
<keyword id="KW-0067">ATP-binding</keyword>
<keyword id="KW-0963">Cytoplasm</keyword>
<keyword id="KW-0436">Ligase</keyword>
<keyword id="KW-0547">Nucleotide-binding</keyword>
<keyword id="KW-0648">Protein biosynthesis</keyword>
<keyword id="KW-1185">Reference proteome</keyword>
<comment type="function">
    <text evidence="1">Aspartyl-tRNA synthetase with relaxed tRNA specificity since it is able to aspartylate not only its cognate tRNA(Asp) but also tRNA(Asn). Reaction proceeds in two steps: L-aspartate is first activated by ATP to form Asp-AMP and then transferred to the acceptor end of tRNA(Asp/Asn).</text>
</comment>
<comment type="catalytic activity">
    <reaction evidence="1">
        <text>tRNA(Asx) + L-aspartate + ATP = L-aspartyl-tRNA(Asx) + AMP + diphosphate</text>
        <dbReference type="Rhea" id="RHEA:18349"/>
        <dbReference type="Rhea" id="RHEA-COMP:9710"/>
        <dbReference type="Rhea" id="RHEA-COMP:9711"/>
        <dbReference type="ChEBI" id="CHEBI:29991"/>
        <dbReference type="ChEBI" id="CHEBI:30616"/>
        <dbReference type="ChEBI" id="CHEBI:33019"/>
        <dbReference type="ChEBI" id="CHEBI:78442"/>
        <dbReference type="ChEBI" id="CHEBI:78516"/>
        <dbReference type="ChEBI" id="CHEBI:456215"/>
        <dbReference type="EC" id="6.1.1.23"/>
    </reaction>
</comment>
<comment type="subunit">
    <text evidence="1">Homodimer.</text>
</comment>
<comment type="subcellular location">
    <subcellularLocation>
        <location evidence="1">Cytoplasm</location>
    </subcellularLocation>
</comment>
<comment type="similarity">
    <text evidence="1">Belongs to the class-II aminoacyl-tRNA synthetase family. Type 1 subfamily.</text>
</comment>
<reference key="1">
    <citation type="journal article" date="2005" name="Arch. Microbiol.">
        <title>The genome sequence of an anaerobic aromatic-degrading denitrifying bacterium, strain EbN1.</title>
        <authorList>
            <person name="Rabus R."/>
            <person name="Kube M."/>
            <person name="Heider J."/>
            <person name="Beck A."/>
            <person name="Heitmann K."/>
            <person name="Widdel F."/>
            <person name="Reinhardt R."/>
        </authorList>
    </citation>
    <scope>NUCLEOTIDE SEQUENCE [LARGE SCALE GENOMIC DNA]</scope>
    <source>
        <strain>DSM 19018 / LMG 30748 / EbN1</strain>
    </source>
</reference>
<proteinExistence type="inferred from homology"/>
<name>SYDND_AROAE</name>